<gene>
    <name type="primary">hup</name>
    <name type="ordered locus">SAS1414</name>
</gene>
<proteinExistence type="inferred from homology"/>
<organism>
    <name type="scientific">Staphylococcus aureus (strain MSSA476)</name>
    <dbReference type="NCBI Taxonomy" id="282459"/>
    <lineage>
        <taxon>Bacteria</taxon>
        <taxon>Bacillati</taxon>
        <taxon>Bacillota</taxon>
        <taxon>Bacilli</taxon>
        <taxon>Bacillales</taxon>
        <taxon>Staphylococcaceae</taxon>
        <taxon>Staphylococcus</taxon>
    </lineage>
</organism>
<feature type="chain" id="PRO_0000223379" description="DNA-binding protein HU">
    <location>
        <begin position="1"/>
        <end position="90"/>
    </location>
</feature>
<name>DBH_STAAS</name>
<accession>Q6G990</accession>
<protein>
    <recommendedName>
        <fullName>DNA-binding protein HU</fullName>
    </recommendedName>
</protein>
<evidence type="ECO:0000250" key="1"/>
<evidence type="ECO:0000305" key="2"/>
<keyword id="KW-0226">DNA condensation</keyword>
<keyword id="KW-0238">DNA-binding</keyword>
<comment type="function">
    <text evidence="1">Histone-like DNA-binding protein which is capable of wrapping DNA to stabilize it, and thus to prevent its denaturation under extreme environmental conditions.</text>
</comment>
<comment type="subunit">
    <text evidence="1">Homodimer.</text>
</comment>
<comment type="similarity">
    <text evidence="2">Belongs to the bacterial histone-like protein family.</text>
</comment>
<reference key="1">
    <citation type="journal article" date="2004" name="Proc. Natl. Acad. Sci. U.S.A.">
        <title>Complete genomes of two clinical Staphylococcus aureus strains: evidence for the rapid evolution of virulence and drug resistance.</title>
        <authorList>
            <person name="Holden M.T.G."/>
            <person name="Feil E.J."/>
            <person name="Lindsay J.A."/>
            <person name="Peacock S.J."/>
            <person name="Day N.P.J."/>
            <person name="Enright M.C."/>
            <person name="Foster T.J."/>
            <person name="Moore C.E."/>
            <person name="Hurst L."/>
            <person name="Atkin R."/>
            <person name="Barron A."/>
            <person name="Bason N."/>
            <person name="Bentley S.D."/>
            <person name="Chillingworth C."/>
            <person name="Chillingworth T."/>
            <person name="Churcher C."/>
            <person name="Clark L."/>
            <person name="Corton C."/>
            <person name="Cronin A."/>
            <person name="Doggett J."/>
            <person name="Dowd L."/>
            <person name="Feltwell T."/>
            <person name="Hance Z."/>
            <person name="Harris B."/>
            <person name="Hauser H."/>
            <person name="Holroyd S."/>
            <person name="Jagels K."/>
            <person name="James K.D."/>
            <person name="Lennard N."/>
            <person name="Line A."/>
            <person name="Mayes R."/>
            <person name="Moule S."/>
            <person name="Mungall K."/>
            <person name="Ormond D."/>
            <person name="Quail M.A."/>
            <person name="Rabbinowitsch E."/>
            <person name="Rutherford K.M."/>
            <person name="Sanders M."/>
            <person name="Sharp S."/>
            <person name="Simmonds M."/>
            <person name="Stevens K."/>
            <person name="Whitehead S."/>
            <person name="Barrell B.G."/>
            <person name="Spratt B.G."/>
            <person name="Parkhill J."/>
        </authorList>
    </citation>
    <scope>NUCLEOTIDE SEQUENCE [LARGE SCALE GENOMIC DNA]</scope>
    <source>
        <strain>MSSA476</strain>
    </source>
</reference>
<dbReference type="EMBL" id="BX571857">
    <property type="protein sequence ID" value="CAG43191.1"/>
    <property type="molecule type" value="Genomic_DNA"/>
</dbReference>
<dbReference type="RefSeq" id="WP_001043863.1">
    <property type="nucleotide sequence ID" value="NC_002953.3"/>
</dbReference>
<dbReference type="SMR" id="Q6G990"/>
<dbReference type="KEGG" id="sas:SAS1414"/>
<dbReference type="HOGENOM" id="CLU_105066_3_2_9"/>
<dbReference type="GO" id="GO:0005829">
    <property type="term" value="C:cytosol"/>
    <property type="evidence" value="ECO:0007669"/>
    <property type="project" value="TreeGrafter"/>
</dbReference>
<dbReference type="GO" id="GO:0003677">
    <property type="term" value="F:DNA binding"/>
    <property type="evidence" value="ECO:0007669"/>
    <property type="project" value="UniProtKB-KW"/>
</dbReference>
<dbReference type="GO" id="GO:0030527">
    <property type="term" value="F:structural constituent of chromatin"/>
    <property type="evidence" value="ECO:0007669"/>
    <property type="project" value="InterPro"/>
</dbReference>
<dbReference type="GO" id="GO:0030261">
    <property type="term" value="P:chromosome condensation"/>
    <property type="evidence" value="ECO:0007669"/>
    <property type="project" value="UniProtKB-KW"/>
</dbReference>
<dbReference type="CDD" id="cd13831">
    <property type="entry name" value="HU"/>
    <property type="match status" value="1"/>
</dbReference>
<dbReference type="FunFam" id="4.10.520.10:FF:000001">
    <property type="entry name" value="DNA-binding protein HU"/>
    <property type="match status" value="1"/>
</dbReference>
<dbReference type="Gene3D" id="4.10.520.10">
    <property type="entry name" value="IHF-like DNA-binding proteins"/>
    <property type="match status" value="1"/>
</dbReference>
<dbReference type="InterPro" id="IPR000119">
    <property type="entry name" value="Hist_DNA-bd"/>
</dbReference>
<dbReference type="InterPro" id="IPR020816">
    <property type="entry name" value="Histone-like_DNA-bd_CS"/>
</dbReference>
<dbReference type="InterPro" id="IPR010992">
    <property type="entry name" value="IHF-like_DNA-bd_dom_sf"/>
</dbReference>
<dbReference type="PANTHER" id="PTHR33175">
    <property type="entry name" value="DNA-BINDING PROTEIN HU"/>
    <property type="match status" value="1"/>
</dbReference>
<dbReference type="PANTHER" id="PTHR33175:SF3">
    <property type="entry name" value="DNA-BINDING PROTEIN HU-BETA"/>
    <property type="match status" value="1"/>
</dbReference>
<dbReference type="Pfam" id="PF00216">
    <property type="entry name" value="Bac_DNA_binding"/>
    <property type="match status" value="1"/>
</dbReference>
<dbReference type="PRINTS" id="PR01727">
    <property type="entry name" value="DNABINDINGHU"/>
</dbReference>
<dbReference type="SMART" id="SM00411">
    <property type="entry name" value="BHL"/>
    <property type="match status" value="1"/>
</dbReference>
<dbReference type="SUPFAM" id="SSF47729">
    <property type="entry name" value="IHF-like DNA-binding proteins"/>
    <property type="match status" value="1"/>
</dbReference>
<dbReference type="PROSITE" id="PS00045">
    <property type="entry name" value="HISTONE_LIKE"/>
    <property type="match status" value="1"/>
</dbReference>
<sequence>MNKTDLINAVAEQADLTKKEAGSAVDAVFESIQNSLAKGEKVQLIGFGNFEVRERAARKGRNPQTGKEIDIPASKVPAFKAGKALKDAVK</sequence>